<reference key="1">
    <citation type="submission" date="2007-06" db="EMBL/GenBank/DDBJ databases">
        <title>Complete sequence of Methanococcus vannielii SB.</title>
        <authorList>
            <consortium name="US DOE Joint Genome Institute"/>
            <person name="Copeland A."/>
            <person name="Lucas S."/>
            <person name="Lapidus A."/>
            <person name="Barry K."/>
            <person name="Glavina del Rio T."/>
            <person name="Dalin E."/>
            <person name="Tice H."/>
            <person name="Pitluck S."/>
            <person name="Chain P."/>
            <person name="Malfatti S."/>
            <person name="Shin M."/>
            <person name="Vergez L."/>
            <person name="Schmutz J."/>
            <person name="Larimer F."/>
            <person name="Land M."/>
            <person name="Hauser L."/>
            <person name="Kyrpides N."/>
            <person name="Anderson I."/>
            <person name="Sieprawska-Lupa M."/>
            <person name="Whitman W.B."/>
            <person name="Richardson P."/>
        </authorList>
    </citation>
    <scope>NUCLEOTIDE SEQUENCE [LARGE SCALE GENOMIC DNA]</scope>
    <source>
        <strain>ATCC 35089 / DSM 1224 / JCM 13029 / OCM 148 / SB</strain>
    </source>
</reference>
<name>THIC_METVS</name>
<sequence length="426" mass="47474">MTQLTDAKSGIVTEEMKFVADEEKIDVNYLRKLIEKGYVVIPKNINRKTKPVGIGDNLRTKVNVNLGTSPDFIDISCELKKVEISNKYGADAIMDLSTGGNLPEIRSQIMKNTNLPIGTVPIYEVGVDSKEKYGRVIDMDEDLIFNVIERQAQEGVDFMTLHCGITKQSVDTLNKDPRKMGVVSRGGAFLTAYIMYHNKENPLYRDFDYLLEILKEHDVTLSLGDGMRPGCLQDNTDRAQIQELITLGELVDRCREKGVQVMVEGPGHVPYNNIQANMQIQKTICKNAPFYVLGPIVTDLAPGYDHITAAIGGTLAAVSGANFLCYVTPAEHVRLMKEEEVKEGLIASKIAAQAADVAKGNPVAWNKERQMADARIKHDWERQFEIALDSDKPKKMREEIPSKDEKACSVCGDYCALLMVEELGKR</sequence>
<feature type="chain" id="PRO_1000004775" description="Phosphomethylpyrimidine synthase">
    <location>
        <begin position="1"/>
        <end position="426"/>
    </location>
</feature>
<feature type="binding site" evidence="1">
    <location>
        <position position="65"/>
    </location>
    <ligand>
        <name>substrate</name>
    </ligand>
</feature>
<feature type="binding site" evidence="1">
    <location>
        <position position="94"/>
    </location>
    <ligand>
        <name>substrate</name>
    </ligand>
</feature>
<feature type="binding site" evidence="1">
    <location>
        <position position="123"/>
    </location>
    <ligand>
        <name>substrate</name>
    </ligand>
</feature>
<feature type="binding site" evidence="1">
    <location>
        <position position="162"/>
    </location>
    <ligand>
        <name>substrate</name>
    </ligand>
</feature>
<feature type="binding site" evidence="1">
    <location>
        <begin position="184"/>
        <end position="186"/>
    </location>
    <ligand>
        <name>substrate</name>
    </ligand>
</feature>
<feature type="binding site" evidence="1">
    <location>
        <begin position="225"/>
        <end position="228"/>
    </location>
    <ligand>
        <name>substrate</name>
    </ligand>
</feature>
<feature type="binding site" evidence="1">
    <location>
        <position position="264"/>
    </location>
    <ligand>
        <name>substrate</name>
    </ligand>
</feature>
<feature type="binding site" evidence="1">
    <location>
        <position position="268"/>
    </location>
    <ligand>
        <name>Zn(2+)</name>
        <dbReference type="ChEBI" id="CHEBI:29105"/>
    </ligand>
</feature>
<feature type="binding site" evidence="1">
    <location>
        <position position="291"/>
    </location>
    <ligand>
        <name>substrate</name>
    </ligand>
</feature>
<feature type="binding site" evidence="1">
    <location>
        <position position="332"/>
    </location>
    <ligand>
        <name>Zn(2+)</name>
        <dbReference type="ChEBI" id="CHEBI:29105"/>
    </ligand>
</feature>
<feature type="binding site" evidence="1">
    <location>
        <position position="408"/>
    </location>
    <ligand>
        <name>[4Fe-4S] cluster</name>
        <dbReference type="ChEBI" id="CHEBI:49883"/>
        <note>4Fe-4S-S-AdoMet</note>
    </ligand>
</feature>
<feature type="binding site" evidence="1">
    <location>
        <position position="411"/>
    </location>
    <ligand>
        <name>[4Fe-4S] cluster</name>
        <dbReference type="ChEBI" id="CHEBI:49883"/>
        <note>4Fe-4S-S-AdoMet</note>
    </ligand>
</feature>
<feature type="binding site" evidence="1">
    <location>
        <position position="415"/>
    </location>
    <ligand>
        <name>[4Fe-4S] cluster</name>
        <dbReference type="ChEBI" id="CHEBI:49883"/>
        <note>4Fe-4S-S-AdoMet</note>
    </ligand>
</feature>
<keyword id="KW-0004">4Fe-4S</keyword>
<keyword id="KW-0408">Iron</keyword>
<keyword id="KW-0411">Iron-sulfur</keyword>
<keyword id="KW-0456">Lyase</keyword>
<keyword id="KW-0479">Metal-binding</keyword>
<keyword id="KW-0949">S-adenosyl-L-methionine</keyword>
<keyword id="KW-0784">Thiamine biosynthesis</keyword>
<keyword id="KW-0862">Zinc</keyword>
<proteinExistence type="inferred from homology"/>
<accession>A6URG5</accession>
<protein>
    <recommendedName>
        <fullName evidence="1">Phosphomethylpyrimidine synthase</fullName>
        <ecNumber evidence="1">4.1.99.17</ecNumber>
    </recommendedName>
    <alternativeName>
        <fullName evidence="1">Hydroxymethylpyrimidine phosphate synthase</fullName>
        <shortName evidence="1">HMP-P synthase</shortName>
        <shortName evidence="1">HMP-phosphate synthase</shortName>
        <shortName evidence="1">HMPP synthase</shortName>
    </alternativeName>
    <alternativeName>
        <fullName evidence="1">Thiamine biosynthesis protein ThiC</fullName>
    </alternativeName>
</protein>
<comment type="function">
    <text evidence="1">Catalyzes the synthesis of the hydroxymethylpyrimidine phosphate (HMP-P) moiety of thiamine from aminoimidazole ribotide (AIR) in a radical S-adenosyl-L-methionine (SAM)-dependent reaction.</text>
</comment>
<comment type="catalytic activity">
    <reaction evidence="1">
        <text>5-amino-1-(5-phospho-beta-D-ribosyl)imidazole + S-adenosyl-L-methionine = 4-amino-2-methyl-5-(phosphooxymethyl)pyrimidine + CO + 5'-deoxyadenosine + formate + L-methionine + 3 H(+)</text>
        <dbReference type="Rhea" id="RHEA:24840"/>
        <dbReference type="ChEBI" id="CHEBI:15378"/>
        <dbReference type="ChEBI" id="CHEBI:15740"/>
        <dbReference type="ChEBI" id="CHEBI:17245"/>
        <dbReference type="ChEBI" id="CHEBI:17319"/>
        <dbReference type="ChEBI" id="CHEBI:57844"/>
        <dbReference type="ChEBI" id="CHEBI:58354"/>
        <dbReference type="ChEBI" id="CHEBI:59789"/>
        <dbReference type="ChEBI" id="CHEBI:137981"/>
        <dbReference type="EC" id="4.1.99.17"/>
    </reaction>
</comment>
<comment type="cofactor">
    <cofactor evidence="1">
        <name>[4Fe-4S] cluster</name>
        <dbReference type="ChEBI" id="CHEBI:49883"/>
    </cofactor>
    <text evidence="1">Binds 1 [4Fe-4S] cluster per subunit. The cluster is coordinated with 3 cysteines and an exchangeable S-adenosyl-L-methionine.</text>
</comment>
<comment type="pathway">
    <text evidence="1">Cofactor biosynthesis; thiamine diphosphate biosynthesis.</text>
</comment>
<comment type="similarity">
    <text evidence="1">Belongs to the ThiC family.</text>
</comment>
<organism>
    <name type="scientific">Methanococcus vannielii (strain ATCC 35089 / DSM 1224 / JCM 13029 / OCM 148 / SB)</name>
    <dbReference type="NCBI Taxonomy" id="406327"/>
    <lineage>
        <taxon>Archaea</taxon>
        <taxon>Methanobacteriati</taxon>
        <taxon>Methanobacteriota</taxon>
        <taxon>Methanomada group</taxon>
        <taxon>Methanococci</taxon>
        <taxon>Methanococcales</taxon>
        <taxon>Methanococcaceae</taxon>
        <taxon>Methanococcus</taxon>
    </lineage>
</organism>
<evidence type="ECO:0000255" key="1">
    <source>
        <dbReference type="HAMAP-Rule" id="MF_00089"/>
    </source>
</evidence>
<dbReference type="EC" id="4.1.99.17" evidence="1"/>
<dbReference type="EMBL" id="CP000742">
    <property type="protein sequence ID" value="ABR55087.1"/>
    <property type="molecule type" value="Genomic_DNA"/>
</dbReference>
<dbReference type="RefSeq" id="WP_012066002.1">
    <property type="nucleotide sequence ID" value="NC_009634.1"/>
</dbReference>
<dbReference type="SMR" id="A6URG5"/>
<dbReference type="STRING" id="406327.Mevan_1189"/>
<dbReference type="GeneID" id="5325320"/>
<dbReference type="KEGG" id="mvn:Mevan_1189"/>
<dbReference type="eggNOG" id="arCOG02741">
    <property type="taxonomic scope" value="Archaea"/>
</dbReference>
<dbReference type="HOGENOM" id="CLU_013181_2_2_2"/>
<dbReference type="OrthoDB" id="335406at2157"/>
<dbReference type="UniPathway" id="UPA00060"/>
<dbReference type="Proteomes" id="UP000001107">
    <property type="component" value="Chromosome"/>
</dbReference>
<dbReference type="GO" id="GO:0051539">
    <property type="term" value="F:4 iron, 4 sulfur cluster binding"/>
    <property type="evidence" value="ECO:0007669"/>
    <property type="project" value="UniProtKB-KW"/>
</dbReference>
<dbReference type="GO" id="GO:0016830">
    <property type="term" value="F:carbon-carbon lyase activity"/>
    <property type="evidence" value="ECO:0007669"/>
    <property type="project" value="InterPro"/>
</dbReference>
<dbReference type="GO" id="GO:0008270">
    <property type="term" value="F:zinc ion binding"/>
    <property type="evidence" value="ECO:0007669"/>
    <property type="project" value="UniProtKB-UniRule"/>
</dbReference>
<dbReference type="GO" id="GO:0009228">
    <property type="term" value="P:thiamine biosynthetic process"/>
    <property type="evidence" value="ECO:0007669"/>
    <property type="project" value="UniProtKB-KW"/>
</dbReference>
<dbReference type="GO" id="GO:0009229">
    <property type="term" value="P:thiamine diphosphate biosynthetic process"/>
    <property type="evidence" value="ECO:0007669"/>
    <property type="project" value="UniProtKB-UniRule"/>
</dbReference>
<dbReference type="FunFam" id="3.20.20.540:FF:000001">
    <property type="entry name" value="Phosphomethylpyrimidine synthase"/>
    <property type="match status" value="1"/>
</dbReference>
<dbReference type="Gene3D" id="3.20.20.540">
    <property type="entry name" value="Radical SAM ThiC family, central domain"/>
    <property type="match status" value="1"/>
</dbReference>
<dbReference type="HAMAP" id="MF_00089">
    <property type="entry name" value="ThiC"/>
    <property type="match status" value="1"/>
</dbReference>
<dbReference type="InterPro" id="IPR037509">
    <property type="entry name" value="ThiC"/>
</dbReference>
<dbReference type="InterPro" id="IPR038521">
    <property type="entry name" value="ThiC/Bza_core_dom"/>
</dbReference>
<dbReference type="InterPro" id="IPR002817">
    <property type="entry name" value="ThiC/BzaA/B"/>
</dbReference>
<dbReference type="NCBIfam" id="NF009895">
    <property type="entry name" value="PRK13352.1"/>
    <property type="match status" value="1"/>
</dbReference>
<dbReference type="NCBIfam" id="TIGR00190">
    <property type="entry name" value="thiC"/>
    <property type="match status" value="1"/>
</dbReference>
<dbReference type="PANTHER" id="PTHR30557:SF1">
    <property type="entry name" value="PHOSPHOMETHYLPYRIMIDINE SYNTHASE, CHLOROPLASTIC"/>
    <property type="match status" value="1"/>
</dbReference>
<dbReference type="PANTHER" id="PTHR30557">
    <property type="entry name" value="THIAMINE BIOSYNTHESIS PROTEIN THIC"/>
    <property type="match status" value="1"/>
</dbReference>
<dbReference type="Pfam" id="PF01964">
    <property type="entry name" value="ThiC_Rad_SAM"/>
    <property type="match status" value="1"/>
</dbReference>
<dbReference type="SFLD" id="SFLDF00407">
    <property type="entry name" value="phosphomethylpyrimidine_syntha"/>
    <property type="match status" value="1"/>
</dbReference>
<dbReference type="SFLD" id="SFLDG01114">
    <property type="entry name" value="phosphomethylpyrimidine_syntha"/>
    <property type="match status" value="1"/>
</dbReference>
<dbReference type="SFLD" id="SFLDS00113">
    <property type="entry name" value="Radical_SAM_Phosphomethylpyrim"/>
    <property type="match status" value="1"/>
</dbReference>
<gene>
    <name evidence="1" type="primary">thiC</name>
    <name type="ordered locus">Mevan_1189</name>
</gene>